<dbReference type="EMBL" id="AJ005645">
    <property type="protein sequence ID" value="CAA06650.1"/>
    <property type="molecule type" value="Genomic_DNA"/>
</dbReference>
<dbReference type="EMBL" id="AP009351">
    <property type="protein sequence ID" value="BAF66795.1"/>
    <property type="molecule type" value="Genomic_DNA"/>
</dbReference>
<dbReference type="RefSeq" id="WP_001060502.1">
    <property type="nucleotide sequence ID" value="NZ_JBBIAE010000002.1"/>
</dbReference>
<dbReference type="SMR" id="O86487"/>
<dbReference type="KEGG" id="sae:NWMN_0523"/>
<dbReference type="HOGENOM" id="CLU_004137_1_2_9"/>
<dbReference type="PRO" id="PR:O86487"/>
<dbReference type="Proteomes" id="UP000006386">
    <property type="component" value="Chromosome"/>
</dbReference>
<dbReference type="GO" id="GO:0005576">
    <property type="term" value="C:extracellular region"/>
    <property type="evidence" value="ECO:0007669"/>
    <property type="project" value="UniProtKB-KW"/>
</dbReference>
<dbReference type="GO" id="GO:0007155">
    <property type="term" value="P:cell adhesion"/>
    <property type="evidence" value="ECO:0007669"/>
    <property type="project" value="InterPro"/>
</dbReference>
<dbReference type="Gene3D" id="2.60.40.1280">
    <property type="match status" value="1"/>
</dbReference>
<dbReference type="Gene3D" id="2.60.40.1290">
    <property type="match status" value="1"/>
</dbReference>
<dbReference type="Gene3D" id="2.60.40.10">
    <property type="entry name" value="Immunoglobulins"/>
    <property type="match status" value="2"/>
</dbReference>
<dbReference type="InterPro" id="IPR011266">
    <property type="entry name" value="Adhesin_Fg-bd_dom_2"/>
</dbReference>
<dbReference type="InterPro" id="IPR008966">
    <property type="entry name" value="Adhesion_dom_sf"/>
</dbReference>
<dbReference type="InterPro" id="IPR011252">
    <property type="entry name" value="Fibrogen-bd_dom1"/>
</dbReference>
<dbReference type="InterPro" id="IPR013783">
    <property type="entry name" value="Ig-like_fold"/>
</dbReference>
<dbReference type="InterPro" id="IPR019931">
    <property type="entry name" value="LPXTG_anchor"/>
</dbReference>
<dbReference type="InterPro" id="IPR050972">
    <property type="entry name" value="SDr-like"/>
</dbReference>
<dbReference type="InterPro" id="IPR033764">
    <property type="entry name" value="Sdr_B"/>
</dbReference>
<dbReference type="InterPro" id="IPR041171">
    <property type="entry name" value="SDR_Ig"/>
</dbReference>
<dbReference type="InterPro" id="IPR005877">
    <property type="entry name" value="YSIRK_signal_dom"/>
</dbReference>
<dbReference type="NCBIfam" id="TIGR01167">
    <property type="entry name" value="LPXTG_anchor"/>
    <property type="match status" value="1"/>
</dbReference>
<dbReference type="NCBIfam" id="NF000535">
    <property type="entry name" value="MSCRAMM_SdrC"/>
    <property type="match status" value="1"/>
</dbReference>
<dbReference type="NCBIfam" id="TIGR01168">
    <property type="entry name" value="YSIRK_signal"/>
    <property type="match status" value="1"/>
</dbReference>
<dbReference type="PANTHER" id="PTHR34403">
    <property type="entry name" value="TOL-PAL SYSTEM PROTEIN TOLA"/>
    <property type="match status" value="1"/>
</dbReference>
<dbReference type="PANTHER" id="PTHR34403:SF8">
    <property type="entry name" value="TOL-PAL SYSTEM PROTEIN TOLA"/>
    <property type="match status" value="1"/>
</dbReference>
<dbReference type="Pfam" id="PF17961">
    <property type="entry name" value="Big_8"/>
    <property type="match status" value="1"/>
</dbReference>
<dbReference type="Pfam" id="PF00746">
    <property type="entry name" value="Gram_pos_anchor"/>
    <property type="match status" value="1"/>
</dbReference>
<dbReference type="Pfam" id="PF17210">
    <property type="entry name" value="SdrD_B"/>
    <property type="match status" value="2"/>
</dbReference>
<dbReference type="Pfam" id="PF10425">
    <property type="entry name" value="SdrG_C_C"/>
    <property type="match status" value="1"/>
</dbReference>
<dbReference type="Pfam" id="PF04650">
    <property type="entry name" value="YSIRK_signal"/>
    <property type="match status" value="1"/>
</dbReference>
<dbReference type="SUPFAM" id="SSF49401">
    <property type="entry name" value="Bacterial adhesins"/>
    <property type="match status" value="2"/>
</dbReference>
<dbReference type="SUPFAM" id="SSF117074">
    <property type="entry name" value="Hypothetical protein PA1324"/>
    <property type="match status" value="2"/>
</dbReference>
<dbReference type="PROSITE" id="PS50847">
    <property type="entry name" value="GRAM_POS_ANCHORING"/>
    <property type="match status" value="1"/>
</dbReference>
<proteinExistence type="evidence at protein level"/>
<organism>
    <name type="scientific">Staphylococcus aureus (strain Newman)</name>
    <dbReference type="NCBI Taxonomy" id="426430"/>
    <lineage>
        <taxon>Bacteria</taxon>
        <taxon>Bacillati</taxon>
        <taxon>Bacillota</taxon>
        <taxon>Bacilli</taxon>
        <taxon>Bacillales</taxon>
        <taxon>Staphylococcaceae</taxon>
        <taxon>Staphylococcus</taxon>
    </lineage>
</organism>
<keyword id="KW-0106">Calcium</keyword>
<keyword id="KW-0134">Cell wall</keyword>
<keyword id="KW-0572">Peptidoglycan-anchor</keyword>
<keyword id="KW-0677">Repeat</keyword>
<keyword id="KW-0964">Secreted</keyword>
<keyword id="KW-0732">Signal</keyword>
<protein>
    <recommendedName>
        <fullName>Serine-aspartate repeat-containing protein C</fullName>
    </recommendedName>
</protein>
<name>SDRC_STAAE</name>
<reference key="1">
    <citation type="journal article" date="1998" name="Microbiology">
        <title>Three new members of the serine-aspartate repeat protein multigene family of Staphylococcus aureus.</title>
        <authorList>
            <person name="Josefsson E."/>
            <person name="McCrea K.W."/>
            <person name="Eidhin D.N."/>
            <person name="O'Connell D."/>
            <person name="Cox J.A."/>
            <person name="Hoeoek M."/>
            <person name="Foster T.J."/>
        </authorList>
    </citation>
    <scope>NUCLEOTIDE SEQUENCE [GENOMIC DNA]</scope>
    <scope>FUNCTION</scope>
</reference>
<reference key="2">
    <citation type="journal article" date="2008" name="J. Bacteriol.">
        <title>Genome sequence of Staphylococcus aureus strain Newman and comparative analysis of staphylococcal genomes: polymorphism and evolution of two major pathogenicity islands.</title>
        <authorList>
            <person name="Baba T."/>
            <person name="Bae T."/>
            <person name="Schneewind O."/>
            <person name="Takeuchi F."/>
            <person name="Hiramatsu K."/>
        </authorList>
    </citation>
    <scope>NUCLEOTIDE SEQUENCE [LARGE SCALE GENOMIC DNA]</scope>
    <source>
        <strain>Newman</strain>
    </source>
</reference>
<reference key="3">
    <citation type="journal article" date="2010" name="PLoS Pathog.">
        <title>beta-Neurexin is a ligand for the Staphylococcus aureus MSCRAMM SdrC.</title>
        <authorList>
            <person name="Barbu E.M."/>
            <person name="Ganesh V.K."/>
            <person name="Gurusiddappa S."/>
            <person name="Mackenzie R.C."/>
            <person name="Foster T.J."/>
            <person name="Sudhof T.C."/>
            <person name="Hoeoek M."/>
        </authorList>
    </citation>
    <scope>FUNCTION</scope>
    <scope>INTERACTION WITH HOST NRXN1</scope>
    <source>
        <strain>Newman</strain>
    </source>
</reference>
<reference key="4">
    <citation type="journal article" date="2014" name="Mol. Microbiol.">
        <title>SdrC induces staphylococcal biofilm formation through a homophilic interaction.</title>
        <authorList>
            <person name="Barbu E.M."/>
            <person name="Mackenzie C."/>
            <person name="Foster T.J."/>
            <person name="Hoeoek M."/>
        </authorList>
    </citation>
    <scope>SUBUNIT</scope>
    <source>
        <strain>Newman</strain>
    </source>
</reference>
<reference key="5">
    <citation type="journal article" date="2017" name="Proc. Natl. Acad. Sci. U.S.A.">
        <title>Molecular interactions and inhibition of the staphylococcal biofilm-forming protein SdrC.</title>
        <authorList>
            <person name="Feuillie C."/>
            <person name="Formosa-Dague C."/>
            <person name="Hays L.M."/>
            <person name="Vervaeck O."/>
            <person name="Derclaye S."/>
            <person name="Brennan M.P."/>
            <person name="Foster T.J."/>
            <person name="Geoghegan J.A."/>
            <person name="Dufrene Y.F."/>
        </authorList>
    </citation>
    <scope>FUNCTION</scope>
</reference>
<comment type="function">
    <text evidence="5 7 8">Cell surface-associated calcium-binding protein which plays an important role in adhesion and pathogenesis (PubMed:20090838, PubMed:28320940, PubMed:9884231). Mediates interactions with components of the extracellular matrix such as host NRXN1 to promote bacterial adhesion (PubMed:20090838).</text>
</comment>
<comment type="subunit">
    <text evidence="5 6">Homodimerizes; via N2-Domain (PubMed:25115812). Interacts with host NRXN1; this interaction mediates bacterial attachment to host cells (PubMed:20090838).</text>
</comment>
<comment type="subcellular location">
    <subcellularLocation>
        <location evidence="3">Secreted</location>
        <location evidence="3">Cell wall</location>
        <topology evidence="3">Peptidoglycan-anchor</topology>
    </subcellularLocation>
    <text evidence="9">Anchored to the cell wall by sortase A.</text>
</comment>
<comment type="similarity">
    <text evidence="9">Belongs to the serine-aspartate repeat-containing protein (SDr) family.</text>
</comment>
<accession>O86487</accession>
<accession>A6QEL3</accession>
<sequence>MNNKKTATNRKGMIPNRLNKFSIRKYSVGTASILVGTTLIFGLSGHEAKAAEHTNGELNQSKNETTAPSENKTTKKVDSRQLKDNTQTATADQPKVTMSDSATVKETSSNMQSPQNATANQSTTKTSNVTTNDKSSTTYSNETDKSNLTQAKDVSTTPKTTTIKPRTLNRMAVNTVAAPQQGTNVNDKVHFSNIDIAIDKGHVNQTTGKTEFWATSSDVLKLKANYTIDDSVKEGDTFTFKYGQYFRPGSVRLPSQTQNLYNAQGNIIAKGIYDSTTNTTTYTFTNYVDQYTNVRGSFEQVAFAKRKNATTDKTAYKMEVTLGNDTYSEEIIVDYGNKKAQPLISSTNYINNEDLSRNMTAYVNQPKNTYTKQTFVTNLTGYKFNPNAKNFKIYEVTDQNQFVDSFTPDTSKLKDVTDQFDVIYSNDNKTATVDLMKGQTSSNKQYIIQQVAYPDNSSTDNGKIDYTLDTDKTKYSWSNSYSNVNGSSTANGDQKKYNLGDYVWEDTNKDGKQDANEKGIKGVYVILKDSNGKELDRTTTDENGKYQFTGLSNGTYSVEFSTPAGYTPTTANVGTDDAVDSDGLTTTGVIKDADNMTLDSGFYKTPKYSLGDYVWYDSNKDGKQDSTEKGIKGVKVTLQNEKGEVIGTTETDENGKYRFDNLDSGKYKVIFEKPAGLTQTGTNTTEDDKDADGGEVDVTITDHDDFTLDNGYYEEETSDSDSDSDSDSDSDSDSDSDSDSDSDSDSDSDSDSDSDSDSDSDSDSDSNSDSDSDSDSDSDSDSDSDSDSDSDSDSDSDSDSDSDSDSDSDSDSDSDSDSDSDSDSDSDSDSDSDSDSDSDSDSDSDSDSDSDSDSDSDSDSDSDSDSDSDSDSDSDNDSDSDSDSDSDAGKHTPAKPMSTVKDQHKTAKALPETGSENNNSNNGTLFGGLFAALGSLLLFGRRKKQNK</sequence>
<evidence type="ECO:0000250" key="1">
    <source>
        <dbReference type="UniProtKB" id="Q2G0L5"/>
    </source>
</evidence>
<evidence type="ECO:0000255" key="2"/>
<evidence type="ECO:0000255" key="3">
    <source>
        <dbReference type="PROSITE-ProRule" id="PRU00477"/>
    </source>
</evidence>
<evidence type="ECO:0000256" key="4">
    <source>
        <dbReference type="SAM" id="MobiDB-lite"/>
    </source>
</evidence>
<evidence type="ECO:0000269" key="5">
    <source>
    </source>
</evidence>
<evidence type="ECO:0000269" key="6">
    <source>
    </source>
</evidence>
<evidence type="ECO:0000269" key="7">
    <source>
    </source>
</evidence>
<evidence type="ECO:0000269" key="8">
    <source>
    </source>
</evidence>
<evidence type="ECO:0000305" key="9"/>
<gene>
    <name type="primary">sdrC</name>
    <name type="ordered locus">NWMN_0523</name>
</gene>
<feature type="signal peptide" evidence="2">
    <location>
        <begin position="1"/>
        <end position="50"/>
    </location>
</feature>
<feature type="chain" id="PRO_0000280233" description="Serine-aspartate repeat-containing protein C">
    <location>
        <begin position="51"/>
        <end position="913"/>
    </location>
</feature>
<feature type="propeptide" id="PRO_0000280234" description="Removed by sortase" evidence="3">
    <location>
        <begin position="914"/>
        <end position="947"/>
    </location>
</feature>
<feature type="domain" description="CNA-B 1">
    <location>
        <begin position="496"/>
        <end position="606"/>
    </location>
</feature>
<feature type="domain" description="CNA-B 2">
    <location>
        <begin position="607"/>
        <end position="717"/>
    </location>
</feature>
<feature type="region of interest" description="Ligand binding A region">
    <location>
        <begin position="51"/>
        <end position="495"/>
    </location>
</feature>
<feature type="region of interest" description="Disordered" evidence="4">
    <location>
        <begin position="51"/>
        <end position="164"/>
    </location>
</feature>
<feature type="region of interest" description="Disordered" evidence="4">
    <location>
        <begin position="678"/>
        <end position="927"/>
    </location>
</feature>
<feature type="short sequence motif" description="YSIRK-G/S signaling motif" evidence="1">
    <location>
        <begin position="21"/>
        <end position="32"/>
    </location>
</feature>
<feature type="short sequence motif" description="LPXTG sorting signal" evidence="3">
    <location>
        <begin position="910"/>
        <end position="914"/>
    </location>
</feature>
<feature type="compositionally biased region" description="Polar residues" evidence="4">
    <location>
        <begin position="56"/>
        <end position="71"/>
    </location>
</feature>
<feature type="compositionally biased region" description="Basic and acidic residues" evidence="4">
    <location>
        <begin position="72"/>
        <end position="83"/>
    </location>
</feature>
<feature type="compositionally biased region" description="Polar residues" evidence="4">
    <location>
        <begin position="84"/>
        <end position="155"/>
    </location>
</feature>
<feature type="compositionally biased region" description="Acidic residues" evidence="4">
    <location>
        <begin position="685"/>
        <end position="695"/>
    </location>
</feature>
<feature type="compositionally biased region" description="Acidic residues" evidence="4">
    <location>
        <begin position="712"/>
        <end position="886"/>
    </location>
</feature>
<feature type="compositionally biased region" description="Low complexity" evidence="4">
    <location>
        <begin position="912"/>
        <end position="927"/>
    </location>
</feature>
<feature type="modified residue" description="Pentaglycyl murein peptidoglycan amidated threonine" evidence="3">
    <location>
        <position position="913"/>
    </location>
</feature>
<feature type="sequence conflict" description="In Ref. 1; CAA06650." evidence="9" ref="1">
    <original>L</original>
    <variation>S</variation>
    <location>
        <position position="938"/>
    </location>
</feature>